<feature type="chain" id="PRO_0000343623" description="HTH-type transcriptional regulator Hpr">
    <location>
        <begin position="1"/>
        <end position="192"/>
    </location>
</feature>
<feature type="domain" description="HTH marR-type" evidence="1">
    <location>
        <begin position="12"/>
        <end position="156"/>
    </location>
</feature>
<feature type="DNA-binding region" description="H-T-H motif" evidence="1">
    <location>
        <begin position="62"/>
        <end position="85"/>
    </location>
</feature>
<proteinExistence type="inferred from homology"/>
<gene>
    <name evidence="1" type="primary">hpr</name>
    <name type="ordered locus">BH1185</name>
</gene>
<organism>
    <name type="scientific">Halalkalibacterium halodurans (strain ATCC BAA-125 / DSM 18197 / FERM 7344 / JCM 9153 / C-125)</name>
    <name type="common">Bacillus halodurans</name>
    <dbReference type="NCBI Taxonomy" id="272558"/>
    <lineage>
        <taxon>Bacteria</taxon>
        <taxon>Bacillati</taxon>
        <taxon>Bacillota</taxon>
        <taxon>Bacilli</taxon>
        <taxon>Bacillales</taxon>
        <taxon>Bacillaceae</taxon>
        <taxon>Halalkalibacterium (ex Joshi et al. 2022)</taxon>
    </lineage>
</organism>
<comment type="function">
    <text evidence="1">Negative regulator of protease production and sporulation.</text>
</comment>
<comment type="subunit">
    <text evidence="1">Homodimer.</text>
</comment>
<sequence length="192" mass="22239">MEQQTAYSLKQSIIFSHKFAQLSKALWKSVEKDWQTWIKPFNLNINEHHILWITYHLDGASISDIAKFGVMHVSTAFNFSKKLEERGLLTFSKREHDKRNTYVDLTEQGRELFLETLEAYKPSTYSVYGGALPIKDLYGKFPEFSELLSIVRHVYGPDFIDMFETALTRLEDGFIEEDGKLKAVDSETKSTV</sequence>
<reference key="1">
    <citation type="journal article" date="2000" name="Nucleic Acids Res.">
        <title>Complete genome sequence of the alkaliphilic bacterium Bacillus halodurans and genomic sequence comparison with Bacillus subtilis.</title>
        <authorList>
            <person name="Takami H."/>
            <person name="Nakasone K."/>
            <person name="Takaki Y."/>
            <person name="Maeno G."/>
            <person name="Sasaki R."/>
            <person name="Masui N."/>
            <person name="Fuji F."/>
            <person name="Hirama C."/>
            <person name="Nakamura Y."/>
            <person name="Ogasawara N."/>
            <person name="Kuhara S."/>
            <person name="Horikoshi K."/>
        </authorList>
    </citation>
    <scope>NUCLEOTIDE SEQUENCE [LARGE SCALE GENOMIC DNA]</scope>
    <source>
        <strain>ATCC BAA-125 / DSM 18197 / FERM 7344 / JCM 9153 / C-125</strain>
    </source>
</reference>
<protein>
    <recommendedName>
        <fullName evidence="1">HTH-type transcriptional regulator Hpr</fullName>
    </recommendedName>
    <alternativeName>
        <fullName evidence="1">Protease production regulatory protein Hpr</fullName>
    </alternativeName>
</protein>
<dbReference type="EMBL" id="BA000004">
    <property type="protein sequence ID" value="BAB04904.1"/>
    <property type="molecule type" value="Genomic_DNA"/>
</dbReference>
<dbReference type="PIR" id="A83798">
    <property type="entry name" value="A83798"/>
</dbReference>
<dbReference type="RefSeq" id="WP_010897354.1">
    <property type="nucleotide sequence ID" value="NC_002570.2"/>
</dbReference>
<dbReference type="SMR" id="Q9KDM7"/>
<dbReference type="STRING" id="272558.gene:10727079"/>
<dbReference type="KEGG" id="bha:BH1185"/>
<dbReference type="eggNOG" id="COG1846">
    <property type="taxonomic scope" value="Bacteria"/>
</dbReference>
<dbReference type="HOGENOM" id="CLU_115790_0_0_9"/>
<dbReference type="OrthoDB" id="2393954at2"/>
<dbReference type="Proteomes" id="UP000001258">
    <property type="component" value="Chromosome"/>
</dbReference>
<dbReference type="GO" id="GO:0003677">
    <property type="term" value="F:DNA binding"/>
    <property type="evidence" value="ECO:0007669"/>
    <property type="project" value="UniProtKB-UniRule"/>
</dbReference>
<dbReference type="GO" id="GO:0003700">
    <property type="term" value="F:DNA-binding transcription factor activity"/>
    <property type="evidence" value="ECO:0007669"/>
    <property type="project" value="UniProtKB-UniRule"/>
</dbReference>
<dbReference type="GO" id="GO:0045892">
    <property type="term" value="P:negative regulation of DNA-templated transcription"/>
    <property type="evidence" value="ECO:0007669"/>
    <property type="project" value="UniProtKB-UniRule"/>
</dbReference>
<dbReference type="GO" id="GO:0006950">
    <property type="term" value="P:response to stress"/>
    <property type="evidence" value="ECO:0007669"/>
    <property type="project" value="TreeGrafter"/>
</dbReference>
<dbReference type="GO" id="GO:0030435">
    <property type="term" value="P:sporulation resulting in formation of a cellular spore"/>
    <property type="evidence" value="ECO:0007669"/>
    <property type="project" value="UniProtKB-UniRule"/>
</dbReference>
<dbReference type="Gene3D" id="1.10.10.10">
    <property type="entry name" value="Winged helix-like DNA-binding domain superfamily/Winged helix DNA-binding domain"/>
    <property type="match status" value="1"/>
</dbReference>
<dbReference type="HAMAP" id="MF_01911">
    <property type="entry name" value="HTH_type_Hpr"/>
    <property type="match status" value="1"/>
</dbReference>
<dbReference type="InterPro" id="IPR000835">
    <property type="entry name" value="HTH_MarR-typ"/>
</dbReference>
<dbReference type="InterPro" id="IPR023488">
    <property type="entry name" value="HTH_tscrpt_reg_Hpr"/>
</dbReference>
<dbReference type="InterPro" id="IPR039422">
    <property type="entry name" value="MarR/SlyA-like"/>
</dbReference>
<dbReference type="InterPro" id="IPR023187">
    <property type="entry name" value="Tscrpt_reg_MarR-type_CS"/>
</dbReference>
<dbReference type="InterPro" id="IPR036388">
    <property type="entry name" value="WH-like_DNA-bd_sf"/>
</dbReference>
<dbReference type="InterPro" id="IPR036390">
    <property type="entry name" value="WH_DNA-bd_sf"/>
</dbReference>
<dbReference type="NCBIfam" id="NF010349">
    <property type="entry name" value="PRK13777.1"/>
    <property type="match status" value="1"/>
</dbReference>
<dbReference type="PANTHER" id="PTHR33164:SF58">
    <property type="entry name" value="DNA-BINDING TRANSCRIPTIONAL REPRESSOR SCOC"/>
    <property type="match status" value="1"/>
</dbReference>
<dbReference type="PANTHER" id="PTHR33164">
    <property type="entry name" value="TRANSCRIPTIONAL REGULATOR, MARR FAMILY"/>
    <property type="match status" value="1"/>
</dbReference>
<dbReference type="Pfam" id="PF01047">
    <property type="entry name" value="MarR"/>
    <property type="match status" value="1"/>
</dbReference>
<dbReference type="SMART" id="SM00347">
    <property type="entry name" value="HTH_MARR"/>
    <property type="match status" value="1"/>
</dbReference>
<dbReference type="SUPFAM" id="SSF46785">
    <property type="entry name" value="Winged helix' DNA-binding domain"/>
    <property type="match status" value="1"/>
</dbReference>
<dbReference type="PROSITE" id="PS01117">
    <property type="entry name" value="HTH_MARR_1"/>
    <property type="match status" value="1"/>
</dbReference>
<dbReference type="PROSITE" id="PS50995">
    <property type="entry name" value="HTH_MARR_2"/>
    <property type="match status" value="1"/>
</dbReference>
<name>HPR_HALH5</name>
<accession>Q9KDM7</accession>
<evidence type="ECO:0000255" key="1">
    <source>
        <dbReference type="HAMAP-Rule" id="MF_01911"/>
    </source>
</evidence>
<keyword id="KW-0238">DNA-binding</keyword>
<keyword id="KW-1185">Reference proteome</keyword>
<keyword id="KW-0678">Repressor</keyword>
<keyword id="KW-0749">Sporulation</keyword>
<keyword id="KW-0804">Transcription</keyword>
<keyword id="KW-0805">Transcription regulation</keyword>